<feature type="chain" id="PRO_0000079993" description="C-mannosyltransferase dpy-19">
    <location>
        <begin position="1"/>
        <end position="683"/>
    </location>
</feature>
<feature type="transmembrane region" description="Helical" evidence="1">
    <location>
        <begin position="21"/>
        <end position="41"/>
    </location>
</feature>
<feature type="transmembrane region" description="Helical" evidence="1">
    <location>
        <begin position="167"/>
        <end position="187"/>
    </location>
</feature>
<feature type="transmembrane region" description="Helical" evidence="1">
    <location>
        <begin position="188"/>
        <end position="208"/>
    </location>
</feature>
<feature type="transmembrane region" description="Helical" evidence="1">
    <location>
        <begin position="220"/>
        <end position="240"/>
    </location>
</feature>
<feature type="transmembrane region" description="Helical" evidence="1">
    <location>
        <begin position="267"/>
        <end position="287"/>
    </location>
</feature>
<feature type="transmembrane region" description="Helical" evidence="1">
    <location>
        <begin position="298"/>
        <end position="318"/>
    </location>
</feature>
<feature type="transmembrane region" description="Helical" evidence="1">
    <location>
        <begin position="319"/>
        <end position="339"/>
    </location>
</feature>
<feature type="transmembrane region" description="Helical" evidence="1">
    <location>
        <begin position="344"/>
        <end position="364"/>
    </location>
</feature>
<feature type="transmembrane region" description="Helical" evidence="1">
    <location>
        <begin position="413"/>
        <end position="433"/>
    </location>
</feature>
<feature type="transmembrane region" description="Helical" evidence="1">
    <location>
        <begin position="467"/>
        <end position="487"/>
    </location>
</feature>
<feature type="transmembrane region" description="Helical" evidence="1">
    <location>
        <begin position="502"/>
        <end position="522"/>
    </location>
</feature>
<feature type="mutagenesis site" description="In dpy-19(e1295); randomize the neuroblast QL and QR asymmetrical pattern of mab-5 expression. Abolishes C-mannosyltransferase activity in vitro." evidence="2 3">
    <original>G</original>
    <variation>D</variation>
    <location>
        <position position="185"/>
    </location>
</feature>
<feature type="mutagenesis site" description="In allele mu78; randomize the neuroblast QL and QR asymmetrical pattern of mab-5 expression." evidence="2">
    <original>L</original>
    <variation>F</variation>
    <location>
        <position position="218"/>
    </location>
</feature>
<feature type="helix" evidence="5">
    <location>
        <begin position="26"/>
        <end position="54"/>
    </location>
</feature>
<feature type="helix" evidence="5">
    <location>
        <begin position="56"/>
        <end position="58"/>
    </location>
</feature>
<feature type="helix" evidence="5">
    <location>
        <begin position="61"/>
        <end position="67"/>
    </location>
</feature>
<feature type="helix" evidence="5">
    <location>
        <begin position="72"/>
        <end position="84"/>
    </location>
</feature>
<feature type="strand" evidence="5">
    <location>
        <begin position="85"/>
        <end position="87"/>
    </location>
</feature>
<feature type="helix" evidence="5">
    <location>
        <begin position="88"/>
        <end position="96"/>
    </location>
</feature>
<feature type="strand" evidence="5">
    <location>
        <begin position="100"/>
        <end position="102"/>
    </location>
</feature>
<feature type="helix" evidence="5">
    <location>
        <begin position="109"/>
        <end position="112"/>
    </location>
</feature>
<feature type="helix" evidence="5">
    <location>
        <begin position="116"/>
        <end position="134"/>
    </location>
</feature>
<feature type="strand" evidence="5">
    <location>
        <begin position="140"/>
        <end position="145"/>
    </location>
</feature>
<feature type="strand" evidence="5">
    <location>
        <begin position="148"/>
        <end position="150"/>
    </location>
</feature>
<feature type="strand" evidence="5">
    <location>
        <begin position="153"/>
        <end position="158"/>
    </location>
</feature>
<feature type="helix" evidence="5">
    <location>
        <begin position="162"/>
        <end position="187"/>
    </location>
</feature>
<feature type="helix" evidence="5">
    <location>
        <begin position="192"/>
        <end position="204"/>
    </location>
</feature>
<feature type="helix" evidence="5">
    <location>
        <begin position="206"/>
        <end position="209"/>
    </location>
</feature>
<feature type="turn" evidence="5">
    <location>
        <begin position="212"/>
        <end position="214"/>
    </location>
</feature>
<feature type="helix" evidence="5">
    <location>
        <begin position="219"/>
        <end position="240"/>
    </location>
</feature>
<feature type="helix" evidence="5">
    <location>
        <begin position="245"/>
        <end position="260"/>
    </location>
</feature>
<feature type="helix" evidence="5">
    <location>
        <begin position="265"/>
        <end position="280"/>
    </location>
</feature>
<feature type="turn" evidence="5">
    <location>
        <begin position="281"/>
        <end position="283"/>
    </location>
</feature>
<feature type="helix" evidence="5">
    <location>
        <begin position="287"/>
        <end position="307"/>
    </location>
</feature>
<feature type="turn" evidence="6">
    <location>
        <begin position="308"/>
        <end position="310"/>
    </location>
</feature>
<feature type="helix" evidence="5">
    <location>
        <begin position="312"/>
        <end position="314"/>
    </location>
</feature>
<feature type="helix" evidence="5">
    <location>
        <begin position="319"/>
        <end position="331"/>
    </location>
</feature>
<feature type="helix" evidence="5">
    <location>
        <begin position="334"/>
        <end position="336"/>
    </location>
</feature>
<feature type="helix" evidence="5">
    <location>
        <begin position="342"/>
        <end position="365"/>
    </location>
</feature>
<feature type="turn" evidence="5">
    <location>
        <begin position="366"/>
        <end position="368"/>
    </location>
</feature>
<feature type="helix" evidence="5">
    <location>
        <begin position="375"/>
        <end position="384"/>
    </location>
</feature>
<feature type="helix" evidence="5">
    <location>
        <begin position="390"/>
        <end position="395"/>
    </location>
</feature>
<feature type="strand" evidence="5">
    <location>
        <begin position="398"/>
        <end position="402"/>
    </location>
</feature>
<feature type="helix" evidence="5">
    <location>
        <begin position="406"/>
        <end position="414"/>
    </location>
</feature>
<feature type="helix" evidence="5">
    <location>
        <begin position="418"/>
        <end position="435"/>
    </location>
</feature>
<feature type="strand" evidence="5">
    <location>
        <begin position="438"/>
        <end position="440"/>
    </location>
</feature>
<feature type="helix" evidence="5">
    <location>
        <begin position="450"/>
        <end position="468"/>
    </location>
</feature>
<feature type="turn" evidence="5">
    <location>
        <begin position="470"/>
        <end position="472"/>
    </location>
</feature>
<feature type="helix" evidence="5">
    <location>
        <begin position="473"/>
        <end position="484"/>
    </location>
</feature>
<feature type="helix" evidence="5">
    <location>
        <begin position="485"/>
        <end position="488"/>
    </location>
</feature>
<feature type="turn" evidence="5">
    <location>
        <begin position="490"/>
        <end position="500"/>
    </location>
</feature>
<feature type="helix" evidence="5">
    <location>
        <begin position="501"/>
        <end position="516"/>
    </location>
</feature>
<feature type="helix" evidence="5">
    <location>
        <begin position="519"/>
        <end position="526"/>
    </location>
</feature>
<feature type="helix" evidence="5">
    <location>
        <begin position="535"/>
        <end position="547"/>
    </location>
</feature>
<feature type="strand" evidence="5">
    <location>
        <begin position="554"/>
        <end position="556"/>
    </location>
</feature>
<feature type="helix" evidence="5">
    <location>
        <begin position="558"/>
        <end position="566"/>
    </location>
</feature>
<feature type="strand" evidence="5">
    <location>
        <begin position="579"/>
        <end position="583"/>
    </location>
</feature>
<feature type="helix" evidence="5">
    <location>
        <begin position="584"/>
        <end position="590"/>
    </location>
</feature>
<feature type="helix" evidence="5">
    <location>
        <begin position="591"/>
        <end position="594"/>
    </location>
</feature>
<feature type="strand" evidence="5">
    <location>
        <begin position="595"/>
        <end position="597"/>
    </location>
</feature>
<feature type="helix" evidence="5">
    <location>
        <begin position="599"/>
        <end position="609"/>
    </location>
</feature>
<feature type="strand" evidence="5">
    <location>
        <begin position="613"/>
        <end position="617"/>
    </location>
</feature>
<feature type="helix" evidence="5">
    <location>
        <begin position="618"/>
        <end position="621"/>
    </location>
</feature>
<feature type="strand" evidence="5">
    <location>
        <begin position="625"/>
        <end position="627"/>
    </location>
</feature>
<feature type="helix" evidence="5">
    <location>
        <begin position="632"/>
        <end position="639"/>
    </location>
</feature>
<feature type="helix" evidence="5">
    <location>
        <begin position="641"/>
        <end position="643"/>
    </location>
</feature>
<feature type="helix" evidence="5">
    <location>
        <begin position="649"/>
        <end position="659"/>
    </location>
</feature>
<feature type="strand" evidence="5">
    <location>
        <begin position="663"/>
        <end position="665"/>
    </location>
</feature>
<feature type="strand" evidence="5">
    <location>
        <begin position="667"/>
        <end position="674"/>
    </location>
</feature>
<feature type="turn" evidence="5">
    <location>
        <begin position="675"/>
        <end position="677"/>
    </location>
</feature>
<feature type="strand" evidence="5">
    <location>
        <begin position="678"/>
        <end position="683"/>
    </location>
</feature>
<gene>
    <name type="primary">dpy-19</name>
    <name type="ORF">F22B7.10</name>
</gene>
<protein>
    <recommendedName>
        <fullName>C-mannosyltransferase dpy-19</fullName>
        <ecNumber>2.4.1.-</ecNumber>
    </recommendedName>
    <alternativeName>
        <fullName>Protein dumpy-19</fullName>
    </alternativeName>
</protein>
<reference key="1">
    <citation type="journal article" date="2000" name="Development">
        <title>Establishment of left/right asymmetry in neuroblast migration by UNC-40/DCC, UNC-73/Trio and DPY-19 proteins in C. elegans.</title>
        <authorList>
            <person name="Honigberg L."/>
            <person name="Kenyon C."/>
        </authorList>
    </citation>
    <scope>NUCLEOTIDE SEQUENCE [GENOMIC DNA]</scope>
    <scope>FUNCTION</scope>
    <scope>TISSUE SPECIFICITY</scope>
    <scope>DISRUPTION PHENOTYPE</scope>
    <scope>MUTAGENESIS OF GLY-185 AND LEU-218</scope>
</reference>
<reference key="2">
    <citation type="journal article" date="1994" name="Nature">
        <title>2.2 Mb of contiguous nucleotide sequence from chromosome III of C. elegans.</title>
        <authorList>
            <person name="Wilson R."/>
            <person name="Ainscough R."/>
            <person name="Anderson K."/>
            <person name="Baynes C."/>
            <person name="Berks M."/>
            <person name="Bonfield J."/>
            <person name="Burton J."/>
            <person name="Connell M."/>
            <person name="Copsey T."/>
            <person name="Cooper J."/>
            <person name="Coulson A."/>
            <person name="Craxton M."/>
            <person name="Dear S."/>
            <person name="Du Z."/>
            <person name="Durbin R."/>
            <person name="Favello A."/>
            <person name="Fraser A."/>
            <person name="Fulton L."/>
            <person name="Gardner A."/>
            <person name="Green P."/>
            <person name="Hawkins T."/>
            <person name="Hillier L."/>
            <person name="Jier M."/>
            <person name="Johnston L."/>
            <person name="Jones M."/>
            <person name="Kershaw J."/>
            <person name="Kirsten J."/>
            <person name="Laisster N."/>
            <person name="Latreille P."/>
            <person name="Lightning J."/>
            <person name="Lloyd C."/>
            <person name="Mortimore B."/>
            <person name="O'Callaghan M."/>
            <person name="Parsons J."/>
            <person name="Percy C."/>
            <person name="Rifken L."/>
            <person name="Roopra A."/>
            <person name="Saunders D."/>
            <person name="Shownkeen R."/>
            <person name="Sims M."/>
            <person name="Smaldon N."/>
            <person name="Smith A."/>
            <person name="Smith M."/>
            <person name="Sonnhammer E."/>
            <person name="Staden R."/>
            <person name="Sulston J."/>
            <person name="Thierry-Mieg J."/>
            <person name="Thomas K."/>
            <person name="Vaudin M."/>
            <person name="Vaughan K."/>
            <person name="Waterston R."/>
            <person name="Watson A."/>
            <person name="Weinstock L."/>
            <person name="Wilkinson-Sproat J."/>
            <person name="Wohldman P."/>
        </authorList>
    </citation>
    <scope>NUCLEOTIDE SEQUENCE [LARGE SCALE GENOMIC DNA]</scope>
    <source>
        <strain>Bristol N2</strain>
    </source>
</reference>
<reference key="3">
    <citation type="journal article" date="1998" name="Science">
        <title>Genome sequence of the nematode C. elegans: a platform for investigating biology.</title>
        <authorList>
            <consortium name="The C. elegans sequencing consortium"/>
        </authorList>
    </citation>
    <scope>NUCLEOTIDE SEQUENCE [LARGE SCALE GENOMIC DNA]</scope>
    <source>
        <strain>Bristol N2</strain>
    </source>
</reference>
<reference key="4">
    <citation type="journal article" date="2013" name="Mol. Cell">
        <title>C. elegans DPY-19 is a C-mannosyltransferase glycosylating thrombospondin repeats.</title>
        <authorList>
            <person name="Buettner F.F."/>
            <person name="Ashikov A."/>
            <person name="Tiemann B."/>
            <person name="Lehle L."/>
            <person name="Bakker H."/>
        </authorList>
    </citation>
    <scope>FUNCTION</scope>
    <scope>CATALYTIC ACTIVITY</scope>
    <scope>MUTAGENESIS OF GLY-185</scope>
</reference>
<evidence type="ECO:0000255" key="1"/>
<evidence type="ECO:0000269" key="2">
    <source>
    </source>
</evidence>
<evidence type="ECO:0000269" key="3">
    <source>
    </source>
</evidence>
<evidence type="ECO:0000305" key="4"/>
<evidence type="ECO:0007829" key="5">
    <source>
        <dbReference type="PDB" id="7ZLG"/>
    </source>
</evidence>
<evidence type="ECO:0007829" key="6">
    <source>
        <dbReference type="PDB" id="7ZLI"/>
    </source>
</evidence>
<accession>P34413</accession>
<proteinExistence type="evidence at protein level"/>
<name>DPY19_CAEEL</name>
<comment type="function">
    <text evidence="2 3">C-mannosyltransferase that mediates C-mannosylation of tryptophan residues on target proteins such as unc-5 and mig-21. Mediates the attachment of alpha-mannose in C-C linkage to the C2 of the indole ring of tryptophan. C-mannosylation takes place in the endoplasmic reticulum and frequently found in thrombospondin (TSP) type-1 repeats and in the WSXWS motif of type I cytokine receptors. Required to orient neuroblasts QL and QR correctly on the anterior/posterior (A/P) axis: QL and QR are born in the same A/P position, but polarize and migrate left/right asymmetrically, QL migrates toward the posterior and QR migrates toward the anterior. Required with unc-40 to express mab-5 correctly in the Q cell descendants.</text>
</comment>
<comment type="subcellular location">
    <subcellularLocation>
        <location evidence="4">Endoplasmic reticulum membrane</location>
        <topology evidence="4">Multi-pass membrane protein</topology>
    </subcellularLocation>
</comment>
<comment type="tissue specificity">
    <text evidence="2">Expressed faintly in neuroblasts QL and QR, more strongly in the neighboring epidermal cells (dorsal hyp7 cells, ventral P cells and lateral V cells), and in dorsal and ventral body muscle cells.</text>
</comment>
<comment type="disruption phenotype">
    <text evidence="2">Defects in the cell polarization of neuroblasts Q cells.</text>
</comment>
<comment type="similarity">
    <text evidence="4">Belongs to the dpy-19 family.</text>
</comment>
<keyword id="KW-0002">3D-structure</keyword>
<keyword id="KW-0217">Developmental protein</keyword>
<keyword id="KW-0221">Differentiation</keyword>
<keyword id="KW-0256">Endoplasmic reticulum</keyword>
<keyword id="KW-0328">Glycosyltransferase</keyword>
<keyword id="KW-0472">Membrane</keyword>
<keyword id="KW-0524">Neurogenesis</keyword>
<keyword id="KW-1185">Reference proteome</keyword>
<keyword id="KW-0808">Transferase</keyword>
<keyword id="KW-0812">Transmembrane</keyword>
<keyword id="KW-1133">Transmembrane helix</keyword>
<sequence length="683" mass="77852">MAKKPKNSPEKSKYSSDTSSSLYSQTWLASVVIIGLLVGYINYQHVYTLFENDKHFSHLADFEREMAYRTEMGLYYSYYKTIINAPSFLEGVQEITHDTVTEHGHEINTLNRFNLYPEVILAFLYRPFRAFAKSANWQIELCWQVNRGELRPVESCEGIGNPHYFYITGVFIVAGTVASSIFYLGVLVSDSIFGGFLSVLCFAFNHGEATRVQWTPPLRESFAFPFIIGHIAILTFVIKYKKSGHSMILLLTSMAVPALLFWQFTQFAFFTQICSIFLAFSLDLIPFSTAKTVIHSHIISFLIGFLLLFGNEMMITALYFPSILALGMIIYISPLLSNLKFRPAYVLFLAIIFASITLGLKIGLSKGLGIEDDAHIFDILRSKFTSFANFHTRLYTCSAEFDFIQYSTIEKLCGTLLIPLALISLVTFVFNFVKNTNLLWRNSEEIGENGEILYNVVQLCCSTVMAFLIMRLKLFMTPHLCIVAALFANSKLLGGDRISKTIRVSALVGVIAILFYRGIPNIRQQLNVKGEYSNPDQEMLFDWIQHNTKQDAVFAGTMPVMANVKLTTLRPIVNHPHYEHVGIRERTLKVYSMFSKKPIAEVHKIMKEMGVNYFVFQLMNCSNDERRPECVYRGMWDEEDPKNSGRTALCDLWILAANSKDNSRIAPFKIVYNANRNYIVLKI</sequence>
<organism>
    <name type="scientific">Caenorhabditis elegans</name>
    <dbReference type="NCBI Taxonomy" id="6239"/>
    <lineage>
        <taxon>Eukaryota</taxon>
        <taxon>Metazoa</taxon>
        <taxon>Ecdysozoa</taxon>
        <taxon>Nematoda</taxon>
        <taxon>Chromadorea</taxon>
        <taxon>Rhabditida</taxon>
        <taxon>Rhabditina</taxon>
        <taxon>Rhabditomorpha</taxon>
        <taxon>Rhabditoidea</taxon>
        <taxon>Rhabditidae</taxon>
        <taxon>Peloderinae</taxon>
        <taxon>Caenorhabditis</taxon>
    </lineage>
</organism>
<dbReference type="EC" id="2.4.1.-"/>
<dbReference type="EMBL" id="FO080222">
    <property type="protein sequence ID" value="CCD62139.1"/>
    <property type="molecule type" value="Genomic_DNA"/>
</dbReference>
<dbReference type="PIR" id="S44629">
    <property type="entry name" value="S44629"/>
</dbReference>
<dbReference type="RefSeq" id="NP_498909.1">
    <property type="nucleotide sequence ID" value="NM_066508.2"/>
</dbReference>
<dbReference type="PDB" id="7ZLG">
    <property type="method" value="EM"/>
    <property type="resolution" value="2.72 A"/>
    <property type="chains" value="A=1-683"/>
</dbReference>
<dbReference type="PDB" id="7ZLH">
    <property type="method" value="EM"/>
    <property type="resolution" value="2.75 A"/>
    <property type="chains" value="A=1-683"/>
</dbReference>
<dbReference type="PDB" id="7ZLI">
    <property type="method" value="EM"/>
    <property type="resolution" value="2.99 A"/>
    <property type="chains" value="A=1-683"/>
</dbReference>
<dbReference type="PDB" id="7ZLJ">
    <property type="method" value="EM"/>
    <property type="resolution" value="3.63 A"/>
    <property type="chains" value="A=1-683"/>
</dbReference>
<dbReference type="PDBsum" id="7ZLG"/>
<dbReference type="PDBsum" id="7ZLH"/>
<dbReference type="PDBsum" id="7ZLI"/>
<dbReference type="PDBsum" id="7ZLJ"/>
<dbReference type="EMDB" id="EMD-14779"/>
<dbReference type="EMDB" id="EMD-14780"/>
<dbReference type="EMDB" id="EMD-14781"/>
<dbReference type="EMDB" id="EMD-14782"/>
<dbReference type="SMR" id="P34413"/>
<dbReference type="BioGRID" id="56129">
    <property type="interactions" value="7"/>
</dbReference>
<dbReference type="FunCoup" id="P34413">
    <property type="interactions" value="2029"/>
</dbReference>
<dbReference type="STRING" id="6239.F22B7.10.1"/>
<dbReference type="CAZy" id="GT98">
    <property type="family name" value="Glycosyltransferase Family 98"/>
</dbReference>
<dbReference type="PaxDb" id="6239-F22B7.10"/>
<dbReference type="PeptideAtlas" id="P34413"/>
<dbReference type="EnsemblMetazoa" id="F22B7.10.1">
    <property type="protein sequence ID" value="F22B7.10.1"/>
    <property type="gene ID" value="WBGene00001078"/>
</dbReference>
<dbReference type="GeneID" id="191628"/>
<dbReference type="KEGG" id="cel:CELE_F22B7.10"/>
<dbReference type="UCSC" id="F22B7.10">
    <property type="organism name" value="c. elegans"/>
</dbReference>
<dbReference type="AGR" id="WB:WBGene00001078"/>
<dbReference type="CTD" id="191628"/>
<dbReference type="WormBase" id="F22B7.10">
    <property type="protein sequence ID" value="CE26462"/>
    <property type="gene ID" value="WBGene00001078"/>
    <property type="gene designation" value="dpy-19"/>
</dbReference>
<dbReference type="eggNOG" id="KOG4587">
    <property type="taxonomic scope" value="Eukaryota"/>
</dbReference>
<dbReference type="GeneTree" id="ENSGT00530000063023"/>
<dbReference type="HOGENOM" id="CLU_014404_0_1_1"/>
<dbReference type="InParanoid" id="P34413"/>
<dbReference type="OMA" id="YDNITEY"/>
<dbReference type="OrthoDB" id="6019623at2759"/>
<dbReference type="PhylomeDB" id="P34413"/>
<dbReference type="BRENDA" id="2.4.1.B72">
    <property type="organism ID" value="1045"/>
</dbReference>
<dbReference type="PRO" id="PR:P34413"/>
<dbReference type="Proteomes" id="UP000001940">
    <property type="component" value="Chromosome III"/>
</dbReference>
<dbReference type="Bgee" id="WBGene00001078">
    <property type="expression patterns" value="Expressed in pharyngeal muscle cell (C elegans) and 4 other cell types or tissues"/>
</dbReference>
<dbReference type="GO" id="GO:0005737">
    <property type="term" value="C:cytoplasm"/>
    <property type="evidence" value="ECO:0000314"/>
    <property type="project" value="WormBase"/>
</dbReference>
<dbReference type="GO" id="GO:0005789">
    <property type="term" value="C:endoplasmic reticulum membrane"/>
    <property type="evidence" value="ECO:0000318"/>
    <property type="project" value="GO_Central"/>
</dbReference>
<dbReference type="GO" id="GO:0048471">
    <property type="term" value="C:perinuclear region of cytoplasm"/>
    <property type="evidence" value="ECO:0000314"/>
    <property type="project" value="WormBase"/>
</dbReference>
<dbReference type="GO" id="GO:0000030">
    <property type="term" value="F:mannosyltransferase activity"/>
    <property type="evidence" value="ECO:0000314"/>
    <property type="project" value="UniProtKB"/>
</dbReference>
<dbReference type="GO" id="GO:0005975">
    <property type="term" value="P:carbohydrate metabolic process"/>
    <property type="evidence" value="ECO:0007669"/>
    <property type="project" value="InterPro"/>
</dbReference>
<dbReference type="GO" id="GO:0030154">
    <property type="term" value="P:cell differentiation"/>
    <property type="evidence" value="ECO:0007669"/>
    <property type="project" value="UniProtKB-KW"/>
</dbReference>
<dbReference type="GO" id="GO:0007399">
    <property type="term" value="P:nervous system development"/>
    <property type="evidence" value="ECO:0007669"/>
    <property type="project" value="UniProtKB-KW"/>
</dbReference>
<dbReference type="GO" id="GO:0018406">
    <property type="term" value="P:protein C-linked glycosylation via 2'-alpha-mannosyl-L-tryptophan"/>
    <property type="evidence" value="ECO:0000314"/>
    <property type="project" value="UniProtKB"/>
</dbReference>
<dbReference type="CDD" id="cd20177">
    <property type="entry name" value="Dpy19"/>
    <property type="match status" value="1"/>
</dbReference>
<dbReference type="InterPro" id="IPR018732">
    <property type="entry name" value="Dpy-19/Dpy-19-like"/>
</dbReference>
<dbReference type="InterPro" id="IPR047462">
    <property type="entry name" value="Dpy19"/>
</dbReference>
<dbReference type="InterPro" id="IPR011330">
    <property type="entry name" value="Glyco_hydro/deAcase_b/a-brl"/>
</dbReference>
<dbReference type="PANTHER" id="PTHR31488:SF1">
    <property type="entry name" value="C-MANNOSYLTRANSFERASE DPY19L1"/>
    <property type="match status" value="1"/>
</dbReference>
<dbReference type="PANTHER" id="PTHR31488">
    <property type="entry name" value="DPY-19-LIKE 1, LIKE (H. SAPIENS)"/>
    <property type="match status" value="1"/>
</dbReference>
<dbReference type="Pfam" id="PF10034">
    <property type="entry name" value="Dpy19"/>
    <property type="match status" value="1"/>
</dbReference>
<dbReference type="SUPFAM" id="SSF88713">
    <property type="entry name" value="Glycoside hydrolase/deacetylase"/>
    <property type="match status" value="1"/>
</dbReference>